<sequence length="417" mass="46059">MESNLSGLVPAAGLVPALPPAVTLGLTAAYTTLYALLFFSVYAQLWLVLLYGHKRLSYQTVFLALCLLWAALRTTLFSFYFRDTPRANRLGPLPFWLLYCCPVCLQFFTLTLMNLYFAQVVFKAKVKRRPEMSRGLLAVRGAFVGASLLFLLVNVLCAVLSHRRRAQPWALLLVRVLVSDSLFVICALSLAACLCLVARRAPSTSIYLEAKGTSVCQAAAMGGAMVLLYASRACYNLTALALAPQSRLDTFDYDWYNVSDQADLVNDLGNKGYLVFGLILFVWELLPTTLLVGFFRVHRPPQDLSTSHILNGQVFASRSYFFDRAGHCEDEGCSWEHSRGESTRCQDQAATTTVSTPPHRRDPPPSPTEYPGPSPPHPRPLCQVCLPLLAQDPGGRGYPLLWPAPCCSCHSELVPSP</sequence>
<gene>
    <name type="primary">GPR137</name>
    <name type="synonym">C11orf4</name>
    <name type="synonym">GPR137A</name>
    <name type="synonym">TM7SF1L1</name>
</gene>
<reference key="1">
    <citation type="journal article" date="2004" name="Nat. Genet.">
        <title>Complete sequencing and characterization of 21,243 full-length human cDNAs.</title>
        <authorList>
            <person name="Ota T."/>
            <person name="Suzuki Y."/>
            <person name="Nishikawa T."/>
            <person name="Otsuki T."/>
            <person name="Sugiyama T."/>
            <person name="Irie R."/>
            <person name="Wakamatsu A."/>
            <person name="Hayashi K."/>
            <person name="Sato H."/>
            <person name="Nagai K."/>
            <person name="Kimura K."/>
            <person name="Makita H."/>
            <person name="Sekine M."/>
            <person name="Obayashi M."/>
            <person name="Nishi T."/>
            <person name="Shibahara T."/>
            <person name="Tanaka T."/>
            <person name="Ishii S."/>
            <person name="Yamamoto J."/>
            <person name="Saito K."/>
            <person name="Kawai Y."/>
            <person name="Isono Y."/>
            <person name="Nakamura Y."/>
            <person name="Nagahari K."/>
            <person name="Murakami K."/>
            <person name="Yasuda T."/>
            <person name="Iwayanagi T."/>
            <person name="Wagatsuma M."/>
            <person name="Shiratori A."/>
            <person name="Sudo H."/>
            <person name="Hosoiri T."/>
            <person name="Kaku Y."/>
            <person name="Kodaira H."/>
            <person name="Kondo H."/>
            <person name="Sugawara M."/>
            <person name="Takahashi M."/>
            <person name="Kanda K."/>
            <person name="Yokoi T."/>
            <person name="Furuya T."/>
            <person name="Kikkawa E."/>
            <person name="Omura Y."/>
            <person name="Abe K."/>
            <person name="Kamihara K."/>
            <person name="Katsuta N."/>
            <person name="Sato K."/>
            <person name="Tanikawa M."/>
            <person name="Yamazaki M."/>
            <person name="Ninomiya K."/>
            <person name="Ishibashi T."/>
            <person name="Yamashita H."/>
            <person name="Murakawa K."/>
            <person name="Fujimori K."/>
            <person name="Tanai H."/>
            <person name="Kimata M."/>
            <person name="Watanabe M."/>
            <person name="Hiraoka S."/>
            <person name="Chiba Y."/>
            <person name="Ishida S."/>
            <person name="Ono Y."/>
            <person name="Takiguchi S."/>
            <person name="Watanabe S."/>
            <person name="Yosida M."/>
            <person name="Hotuta T."/>
            <person name="Kusano J."/>
            <person name="Kanehori K."/>
            <person name="Takahashi-Fujii A."/>
            <person name="Hara H."/>
            <person name="Tanase T.-O."/>
            <person name="Nomura Y."/>
            <person name="Togiya S."/>
            <person name="Komai F."/>
            <person name="Hara R."/>
            <person name="Takeuchi K."/>
            <person name="Arita M."/>
            <person name="Imose N."/>
            <person name="Musashino K."/>
            <person name="Yuuki H."/>
            <person name="Oshima A."/>
            <person name="Sasaki N."/>
            <person name="Aotsuka S."/>
            <person name="Yoshikawa Y."/>
            <person name="Matsunawa H."/>
            <person name="Ichihara T."/>
            <person name="Shiohata N."/>
            <person name="Sano S."/>
            <person name="Moriya S."/>
            <person name="Momiyama H."/>
            <person name="Satoh N."/>
            <person name="Takami S."/>
            <person name="Terashima Y."/>
            <person name="Suzuki O."/>
            <person name="Nakagawa S."/>
            <person name="Senoh A."/>
            <person name="Mizoguchi H."/>
            <person name="Goto Y."/>
            <person name="Shimizu F."/>
            <person name="Wakebe H."/>
            <person name="Hishigaki H."/>
            <person name="Watanabe T."/>
            <person name="Sugiyama A."/>
            <person name="Takemoto M."/>
            <person name="Kawakami B."/>
            <person name="Yamazaki M."/>
            <person name="Watanabe K."/>
            <person name="Kumagai A."/>
            <person name="Itakura S."/>
            <person name="Fukuzumi Y."/>
            <person name="Fujimori Y."/>
            <person name="Komiyama M."/>
            <person name="Tashiro H."/>
            <person name="Tanigami A."/>
            <person name="Fujiwara T."/>
            <person name="Ono T."/>
            <person name="Yamada K."/>
            <person name="Fujii Y."/>
            <person name="Ozaki K."/>
            <person name="Hirao M."/>
            <person name="Ohmori Y."/>
            <person name="Kawabata A."/>
            <person name="Hikiji T."/>
            <person name="Kobatake N."/>
            <person name="Inagaki H."/>
            <person name="Ikema Y."/>
            <person name="Okamoto S."/>
            <person name="Okitani R."/>
            <person name="Kawakami T."/>
            <person name="Noguchi S."/>
            <person name="Itoh T."/>
            <person name="Shigeta K."/>
            <person name="Senba T."/>
            <person name="Matsumura K."/>
            <person name="Nakajima Y."/>
            <person name="Mizuno T."/>
            <person name="Morinaga M."/>
            <person name="Sasaki M."/>
            <person name="Togashi T."/>
            <person name="Oyama M."/>
            <person name="Hata H."/>
            <person name="Watanabe M."/>
            <person name="Komatsu T."/>
            <person name="Mizushima-Sugano J."/>
            <person name="Satoh T."/>
            <person name="Shirai Y."/>
            <person name="Takahashi Y."/>
            <person name="Nakagawa K."/>
            <person name="Okumura K."/>
            <person name="Nagase T."/>
            <person name="Nomura N."/>
            <person name="Kikuchi H."/>
            <person name="Masuho Y."/>
            <person name="Yamashita R."/>
            <person name="Nakai K."/>
            <person name="Yada T."/>
            <person name="Nakamura Y."/>
            <person name="Ohara O."/>
            <person name="Isogai T."/>
            <person name="Sugano S."/>
        </authorList>
    </citation>
    <scope>NUCLEOTIDE SEQUENCE [LARGE SCALE MRNA] (ISOFORMS 1; 4 AND 5)</scope>
    <source>
        <tissue>Placenta</tissue>
        <tissue>Testis</tissue>
    </source>
</reference>
<reference key="2">
    <citation type="journal article" date="2006" name="Nature">
        <title>Human chromosome 11 DNA sequence and analysis including novel gene identification.</title>
        <authorList>
            <person name="Taylor T.D."/>
            <person name="Noguchi H."/>
            <person name="Totoki Y."/>
            <person name="Toyoda A."/>
            <person name="Kuroki Y."/>
            <person name="Dewar K."/>
            <person name="Lloyd C."/>
            <person name="Itoh T."/>
            <person name="Takeda T."/>
            <person name="Kim D.-W."/>
            <person name="She X."/>
            <person name="Barlow K.F."/>
            <person name="Bloom T."/>
            <person name="Bruford E."/>
            <person name="Chang J.L."/>
            <person name="Cuomo C.A."/>
            <person name="Eichler E."/>
            <person name="FitzGerald M.G."/>
            <person name="Jaffe D.B."/>
            <person name="LaButti K."/>
            <person name="Nicol R."/>
            <person name="Park H.-S."/>
            <person name="Seaman C."/>
            <person name="Sougnez C."/>
            <person name="Yang X."/>
            <person name="Zimmer A.R."/>
            <person name="Zody M.C."/>
            <person name="Birren B.W."/>
            <person name="Nusbaum C."/>
            <person name="Fujiyama A."/>
            <person name="Hattori M."/>
            <person name="Rogers J."/>
            <person name="Lander E.S."/>
            <person name="Sakaki Y."/>
        </authorList>
    </citation>
    <scope>NUCLEOTIDE SEQUENCE [LARGE SCALE GENOMIC DNA]</scope>
</reference>
<reference key="3">
    <citation type="journal article" date="2004" name="Genome Res.">
        <title>The status, quality, and expansion of the NIH full-length cDNA project: the Mammalian Gene Collection (MGC).</title>
        <authorList>
            <consortium name="The MGC Project Team"/>
        </authorList>
    </citation>
    <scope>NUCLEOTIDE SEQUENCE [LARGE SCALE MRNA] (ISOFORMS 2 AND 3)</scope>
    <source>
        <tissue>Pancreas</tissue>
    </source>
</reference>
<reference key="4">
    <citation type="journal article" date="2019" name="Nat. Cell Biol.">
        <title>The lysosomal GPCR-like protein GPR137B regulates Rag and mTORC1 localization and activity.</title>
        <authorList>
            <person name="Gan L."/>
            <person name="Seki A."/>
            <person name="Shen K."/>
            <person name="Iyer H."/>
            <person name="Han K."/>
            <person name="Hayer A."/>
            <person name="Wollman R."/>
            <person name="Ge X."/>
            <person name="Lin J.R."/>
            <person name="Dey G."/>
            <person name="Talbot W.S."/>
            <person name="Meyer T."/>
        </authorList>
    </citation>
    <scope>SUBCELLULAR LOCATION</scope>
    <scope>FUNCTION</scope>
</reference>
<comment type="function">
    <text evidence="4">Lysosomal integral membrane protein that may regulate MTORC1 complex translocation to lysosomes (PubMed:31036939). May play a role in autophagy (PubMed:31036939).</text>
</comment>
<comment type="function">
    <text evidence="1">May activate Wnt/beta-catenin signaling to modulate epithelial cell function.</text>
</comment>
<comment type="subcellular location">
    <subcellularLocation>
        <location evidence="4">Lysosome membrane</location>
        <topology evidence="2">Multi-pass membrane protein</topology>
    </subcellularLocation>
</comment>
<comment type="alternative products">
    <event type="alternative splicing"/>
    <isoform>
        <id>Q96N19-1</id>
        <name>1</name>
        <sequence type="displayed"/>
    </isoform>
    <isoform>
        <id>Q96N19-2</id>
        <name>2</name>
        <sequence type="described" ref="VSP_022122"/>
    </isoform>
    <isoform>
        <id>Q96N19-3</id>
        <name>3</name>
        <sequence type="described" ref="VSP_022121 VSP_022122"/>
    </isoform>
    <isoform>
        <id>Q96N19-4</id>
        <name>4</name>
        <sequence type="described" ref="VSP_043278"/>
    </isoform>
    <isoform>
        <id>Q96N19-5</id>
        <name>5</name>
        <sequence type="described" ref="VSP_043592 VSP_043593"/>
    </isoform>
</comment>
<comment type="similarity">
    <text evidence="7">Belongs to the GPR137 family.</text>
</comment>
<evidence type="ECO:0000250" key="1">
    <source>
        <dbReference type="UniProtKB" id="Q80ZU9"/>
    </source>
</evidence>
<evidence type="ECO:0000255" key="2"/>
<evidence type="ECO:0000256" key="3">
    <source>
        <dbReference type="SAM" id="MobiDB-lite"/>
    </source>
</evidence>
<evidence type="ECO:0000269" key="4">
    <source>
    </source>
</evidence>
<evidence type="ECO:0000303" key="5">
    <source>
    </source>
</evidence>
<evidence type="ECO:0000303" key="6">
    <source>
    </source>
</evidence>
<evidence type="ECO:0000305" key="7"/>
<accession>Q96N19</accession>
<accession>B4DTG7</accession>
<accession>B7Z7M1</accession>
<accession>Q4G0Y9</accession>
<accession>Q8N4K6</accession>
<dbReference type="EMBL" id="AK056094">
    <property type="protein sequence ID" value="BAB71093.1"/>
    <property type="molecule type" value="mRNA"/>
</dbReference>
<dbReference type="EMBL" id="AK300209">
    <property type="protein sequence ID" value="BAG61979.1"/>
    <property type="molecule type" value="mRNA"/>
</dbReference>
<dbReference type="EMBL" id="AK302256">
    <property type="protein sequence ID" value="BAH13657.1"/>
    <property type="molecule type" value="mRNA"/>
</dbReference>
<dbReference type="EMBL" id="AP001453">
    <property type="status" value="NOT_ANNOTATED_CDS"/>
    <property type="molecule type" value="Genomic_DNA"/>
</dbReference>
<dbReference type="EMBL" id="BC033920">
    <property type="protein sequence ID" value="AAH33920.1"/>
    <property type="molecule type" value="mRNA"/>
</dbReference>
<dbReference type="EMBL" id="BC035002">
    <property type="protein sequence ID" value="AAH35002.1"/>
    <property type="molecule type" value="mRNA"/>
</dbReference>
<dbReference type="CCDS" id="CCDS53656.1">
    <molecule id="Q96N19-2"/>
</dbReference>
<dbReference type="CCDS" id="CCDS53657.1">
    <molecule id="Q96N19-5"/>
</dbReference>
<dbReference type="CCDS" id="CCDS53658.1">
    <molecule id="Q96N19-3"/>
</dbReference>
<dbReference type="CCDS" id="CCDS8066.1">
    <molecule id="Q96N19-1"/>
</dbReference>
<dbReference type="RefSeq" id="NP_001164197.1">
    <property type="nucleotide sequence ID" value="NM_001170726.1"/>
</dbReference>
<dbReference type="RefSeq" id="NP_001164351.1">
    <molecule id="Q96N19-2"/>
    <property type="nucleotide sequence ID" value="NM_001170880.2"/>
</dbReference>
<dbReference type="RefSeq" id="NP_001164352.1">
    <molecule id="Q96N19-3"/>
    <property type="nucleotide sequence ID" value="NM_001170881.2"/>
</dbReference>
<dbReference type="RefSeq" id="NP_001170829.1">
    <molecule id="Q96N19-5"/>
    <property type="nucleotide sequence ID" value="NM_001177358.2"/>
</dbReference>
<dbReference type="RefSeq" id="NP_001365005.1">
    <molecule id="Q96N19-3"/>
    <property type="nucleotide sequence ID" value="NM_001378076.1"/>
</dbReference>
<dbReference type="RefSeq" id="NP_001365006.1">
    <molecule id="Q96N19-3"/>
    <property type="nucleotide sequence ID" value="NM_001378077.1"/>
</dbReference>
<dbReference type="RefSeq" id="NP_001365007.1">
    <molecule id="Q96N19-2"/>
    <property type="nucleotide sequence ID" value="NM_001378078.1"/>
</dbReference>
<dbReference type="RefSeq" id="NP_001365008.1">
    <molecule id="Q96N19-2"/>
    <property type="nucleotide sequence ID" value="NM_001378079.1"/>
</dbReference>
<dbReference type="RefSeq" id="NP_001365009.1">
    <molecule id="Q96N19-2"/>
    <property type="nucleotide sequence ID" value="NM_001378080.1"/>
</dbReference>
<dbReference type="RefSeq" id="NP_001365010.1">
    <molecule id="Q96N19-2"/>
    <property type="nucleotide sequence ID" value="NM_001378081.1"/>
</dbReference>
<dbReference type="RefSeq" id="NP_001365011.1">
    <molecule id="Q96N19-2"/>
    <property type="nucleotide sequence ID" value="NM_001378082.1"/>
</dbReference>
<dbReference type="RefSeq" id="NP_001365012.1">
    <molecule id="Q96N19-1"/>
    <property type="nucleotide sequence ID" value="NM_001378083.1"/>
</dbReference>
<dbReference type="RefSeq" id="NP_001365013.1">
    <molecule id="Q96N19-5"/>
    <property type="nucleotide sequence ID" value="NM_001378084.1"/>
</dbReference>
<dbReference type="RefSeq" id="NP_001365014.1">
    <molecule id="Q96N19-5"/>
    <property type="nucleotide sequence ID" value="NM_001378085.1"/>
</dbReference>
<dbReference type="RefSeq" id="NP_001365015.1">
    <molecule id="Q96N19-5"/>
    <property type="nucleotide sequence ID" value="NM_001378086.1"/>
</dbReference>
<dbReference type="RefSeq" id="NP_064540.3">
    <molecule id="Q96N19-1"/>
    <property type="nucleotide sequence ID" value="NM_020155.3"/>
</dbReference>
<dbReference type="RefSeq" id="XP_005274157.1">
    <molecule id="Q96N19-1"/>
    <property type="nucleotide sequence ID" value="XM_005274100.3"/>
</dbReference>
<dbReference type="RefSeq" id="XP_005274158.1">
    <property type="nucleotide sequence ID" value="XM_005274101.2"/>
</dbReference>
<dbReference type="RefSeq" id="XP_005274159.1">
    <molecule id="Q96N19-1"/>
    <property type="nucleotide sequence ID" value="XM_005274102.3"/>
</dbReference>
<dbReference type="RefSeq" id="XP_005274161.1">
    <molecule id="Q96N19-1"/>
    <property type="nucleotide sequence ID" value="XM_005274104.3"/>
</dbReference>
<dbReference type="RefSeq" id="XP_011543471.1">
    <molecule id="Q96N19-1"/>
    <property type="nucleotide sequence ID" value="XM_011545169.2"/>
</dbReference>
<dbReference type="RefSeq" id="XP_016873503.1">
    <property type="nucleotide sequence ID" value="XM_017018014.1"/>
</dbReference>
<dbReference type="RefSeq" id="XP_016873504.1">
    <property type="nucleotide sequence ID" value="XM_017018015.1"/>
</dbReference>
<dbReference type="RefSeq" id="XP_047283219.1">
    <molecule id="Q96N19-3"/>
    <property type="nucleotide sequence ID" value="XM_047427263.1"/>
</dbReference>
<dbReference type="RefSeq" id="XP_054225345.1">
    <molecule id="Q96N19-1"/>
    <property type="nucleotide sequence ID" value="XM_054369370.1"/>
</dbReference>
<dbReference type="RefSeq" id="XP_054225346.1">
    <molecule id="Q96N19-1"/>
    <property type="nucleotide sequence ID" value="XM_054369371.1"/>
</dbReference>
<dbReference type="RefSeq" id="XP_054225347.1">
    <molecule id="Q96N19-1"/>
    <property type="nucleotide sequence ID" value="XM_054369372.1"/>
</dbReference>
<dbReference type="RefSeq" id="XP_054225348.1">
    <molecule id="Q96N19-1"/>
    <property type="nucleotide sequence ID" value="XM_054369373.1"/>
</dbReference>
<dbReference type="RefSeq" id="XP_054225350.1">
    <molecule id="Q96N19-3"/>
    <property type="nucleotide sequence ID" value="XM_054369375.1"/>
</dbReference>
<dbReference type="BioGRID" id="121207">
    <property type="interactions" value="7"/>
</dbReference>
<dbReference type="FunCoup" id="Q96N19">
    <property type="interactions" value="265"/>
</dbReference>
<dbReference type="IntAct" id="Q96N19">
    <property type="interactions" value="7"/>
</dbReference>
<dbReference type="MINT" id="Q96N19"/>
<dbReference type="STRING" id="9606.ENSP00000411827"/>
<dbReference type="GlyCosmos" id="Q96N19">
    <property type="glycosylation" value="2 sites, No reported glycans"/>
</dbReference>
<dbReference type="GlyGen" id="Q96N19">
    <property type="glycosylation" value="2 sites"/>
</dbReference>
<dbReference type="iPTMnet" id="Q96N19"/>
<dbReference type="PhosphoSitePlus" id="Q96N19"/>
<dbReference type="BioMuta" id="GPR137"/>
<dbReference type="DMDM" id="126302549"/>
<dbReference type="jPOST" id="Q96N19"/>
<dbReference type="MassIVE" id="Q96N19"/>
<dbReference type="PaxDb" id="9606-ENSP00000411827"/>
<dbReference type="PeptideAtlas" id="Q96N19"/>
<dbReference type="ProteomicsDB" id="77448">
    <molecule id="Q96N19-1"/>
</dbReference>
<dbReference type="ProteomicsDB" id="77449">
    <molecule id="Q96N19-2"/>
</dbReference>
<dbReference type="ProteomicsDB" id="77450">
    <molecule id="Q96N19-3"/>
</dbReference>
<dbReference type="ProteomicsDB" id="77451">
    <molecule id="Q96N19-4"/>
</dbReference>
<dbReference type="ProteomicsDB" id="77452">
    <molecule id="Q96N19-5"/>
</dbReference>
<dbReference type="Antibodypedia" id="15349">
    <property type="antibodies" value="184 antibodies from 22 providers"/>
</dbReference>
<dbReference type="DNASU" id="56834"/>
<dbReference type="Ensembl" id="ENST00000313074.7">
    <molecule id="Q96N19-1"/>
    <property type="protein sequence ID" value="ENSP00000321698.3"/>
    <property type="gene ID" value="ENSG00000173264.16"/>
</dbReference>
<dbReference type="Ensembl" id="ENST00000377702.8">
    <molecule id="Q96N19-3"/>
    <property type="protein sequence ID" value="ENSP00000366931.4"/>
    <property type="gene ID" value="ENSG00000173264.16"/>
</dbReference>
<dbReference type="Ensembl" id="ENST00000411458.5">
    <molecule id="Q96N19-1"/>
    <property type="protein sequence ID" value="ENSP00000411827.2"/>
    <property type="gene ID" value="ENSG00000173264.16"/>
</dbReference>
<dbReference type="Ensembl" id="ENST00000438980.7">
    <molecule id="Q96N19-2"/>
    <property type="protein sequence ID" value="ENSP00000415698.2"/>
    <property type="gene ID" value="ENSG00000173264.16"/>
</dbReference>
<dbReference type="GeneID" id="56834"/>
<dbReference type="KEGG" id="hsa:56834"/>
<dbReference type="MANE-Select" id="ENST00000438980.7">
    <molecule id="Q96N19-2"/>
    <property type="protein sequence ID" value="ENSP00000415698.2"/>
    <property type="RefSeq nucleotide sequence ID" value="NM_001170880.2"/>
    <property type="RefSeq protein sequence ID" value="NP_001164351.1"/>
</dbReference>
<dbReference type="UCSC" id="uc001nzf.4">
    <molecule id="Q96N19-1"/>
    <property type="organism name" value="human"/>
</dbReference>
<dbReference type="AGR" id="HGNC:24300"/>
<dbReference type="CTD" id="56834"/>
<dbReference type="DisGeNET" id="56834"/>
<dbReference type="GeneCards" id="GPR137"/>
<dbReference type="HGNC" id="HGNC:24300">
    <property type="gene designation" value="GPR137"/>
</dbReference>
<dbReference type="HPA" id="ENSG00000173264">
    <property type="expression patterns" value="Tissue enhanced (testis)"/>
</dbReference>
<dbReference type="neXtProt" id="NX_Q96N19"/>
<dbReference type="OpenTargets" id="ENSG00000173264"/>
<dbReference type="PharmGKB" id="PA143485482"/>
<dbReference type="VEuPathDB" id="HostDB:ENSG00000173264"/>
<dbReference type="eggNOG" id="ENOG502QQ83">
    <property type="taxonomic scope" value="Eukaryota"/>
</dbReference>
<dbReference type="GeneTree" id="ENSGT00940000153986"/>
<dbReference type="HOGENOM" id="CLU_050057_0_0_1"/>
<dbReference type="InParanoid" id="Q96N19"/>
<dbReference type="OMA" id="YFFDHPG"/>
<dbReference type="OrthoDB" id="192544at2759"/>
<dbReference type="PAN-GO" id="Q96N19">
    <property type="GO annotations" value="5 GO annotations based on evolutionary models"/>
</dbReference>
<dbReference type="PhylomeDB" id="Q96N19"/>
<dbReference type="TreeFam" id="TF329003"/>
<dbReference type="PathwayCommons" id="Q96N19"/>
<dbReference type="SignaLink" id="Q96N19"/>
<dbReference type="BioGRID-ORCS" id="56834">
    <property type="hits" value="56 hits in 1159 CRISPR screens"/>
</dbReference>
<dbReference type="ChiTaRS" id="GPR137">
    <property type="organism name" value="human"/>
</dbReference>
<dbReference type="GenomeRNAi" id="56834"/>
<dbReference type="Pharos" id="Q96N19">
    <property type="development level" value="Tbio"/>
</dbReference>
<dbReference type="PRO" id="PR:Q96N19"/>
<dbReference type="Proteomes" id="UP000005640">
    <property type="component" value="Chromosome 11"/>
</dbReference>
<dbReference type="RNAct" id="Q96N19">
    <property type="molecule type" value="protein"/>
</dbReference>
<dbReference type="Bgee" id="ENSG00000173264">
    <property type="expression patterns" value="Expressed in right testis and 128 other cell types or tissues"/>
</dbReference>
<dbReference type="ExpressionAtlas" id="Q96N19">
    <property type="expression patterns" value="baseline and differential"/>
</dbReference>
<dbReference type="GO" id="GO:0005765">
    <property type="term" value="C:lysosomal membrane"/>
    <property type="evidence" value="ECO:0000314"/>
    <property type="project" value="UniProtKB"/>
</dbReference>
<dbReference type="GO" id="GO:0006914">
    <property type="term" value="P:autophagy"/>
    <property type="evidence" value="ECO:0007669"/>
    <property type="project" value="UniProtKB-KW"/>
</dbReference>
<dbReference type="GO" id="GO:0045779">
    <property type="term" value="P:negative regulation of bone resorption"/>
    <property type="evidence" value="ECO:0000318"/>
    <property type="project" value="GO_Central"/>
</dbReference>
<dbReference type="GO" id="GO:0045671">
    <property type="term" value="P:negative regulation of osteoclast differentiation"/>
    <property type="evidence" value="ECO:0000318"/>
    <property type="project" value="GO_Central"/>
</dbReference>
<dbReference type="GO" id="GO:1904263">
    <property type="term" value="P:positive regulation of TORC1 signaling"/>
    <property type="evidence" value="ECO:0000318"/>
    <property type="project" value="GO_Central"/>
</dbReference>
<dbReference type="GO" id="GO:0010506">
    <property type="term" value="P:regulation of autophagy"/>
    <property type="evidence" value="ECO:0000318"/>
    <property type="project" value="GO_Central"/>
</dbReference>
<dbReference type="CDD" id="cd21474">
    <property type="entry name" value="7tm_GPR137A"/>
    <property type="match status" value="1"/>
</dbReference>
<dbReference type="InterPro" id="IPR029723">
    <property type="entry name" value="GPR137"/>
</dbReference>
<dbReference type="PANTHER" id="PTHR15146">
    <property type="entry name" value="INTEGRAL MEMBRANE PROTEIN GPR137"/>
    <property type="match status" value="1"/>
</dbReference>
<dbReference type="PANTHER" id="PTHR15146:SF5">
    <property type="entry name" value="INTEGRAL MEMBRANE PROTEIN GPR137"/>
    <property type="match status" value="1"/>
</dbReference>
<protein>
    <recommendedName>
        <fullName>Integral membrane protein GPR137</fullName>
    </recommendedName>
    <alternativeName>
        <fullName>Transmembrane 7 superfamily member 1-like 1 protein</fullName>
    </alternativeName>
</protein>
<name>G137A_HUMAN</name>
<proteinExistence type="evidence at protein level"/>
<organism>
    <name type="scientific">Homo sapiens</name>
    <name type="common">Human</name>
    <dbReference type="NCBI Taxonomy" id="9606"/>
    <lineage>
        <taxon>Eukaryota</taxon>
        <taxon>Metazoa</taxon>
        <taxon>Chordata</taxon>
        <taxon>Craniata</taxon>
        <taxon>Vertebrata</taxon>
        <taxon>Euteleostomi</taxon>
        <taxon>Mammalia</taxon>
        <taxon>Eutheria</taxon>
        <taxon>Euarchontoglires</taxon>
        <taxon>Primates</taxon>
        <taxon>Haplorrhini</taxon>
        <taxon>Catarrhini</taxon>
        <taxon>Hominidae</taxon>
        <taxon>Homo</taxon>
    </lineage>
</organism>
<feature type="chain" id="PRO_0000269996" description="Integral membrane protein GPR137">
    <location>
        <begin position="1"/>
        <end position="417"/>
    </location>
</feature>
<feature type="topological domain" description="Lumenal" evidence="7">
    <location>
        <begin position="1"/>
        <end position="31"/>
    </location>
</feature>
<feature type="transmembrane region" description="Helical; Name=1" evidence="2">
    <location>
        <begin position="32"/>
        <end position="52"/>
    </location>
</feature>
<feature type="topological domain" description="Cytoplasmic" evidence="7">
    <location>
        <begin position="53"/>
        <end position="60"/>
    </location>
</feature>
<feature type="transmembrane region" description="Helical; Name=2" evidence="2">
    <location>
        <begin position="61"/>
        <end position="81"/>
    </location>
</feature>
<feature type="topological domain" description="Lumenal" evidence="7">
    <location>
        <begin position="82"/>
        <end position="89"/>
    </location>
</feature>
<feature type="transmembrane region" description="Helical; Name=3" evidence="2">
    <location>
        <begin position="90"/>
        <end position="110"/>
    </location>
</feature>
<feature type="topological domain" description="Cytoplasmic" evidence="7">
    <location>
        <begin position="111"/>
        <end position="140"/>
    </location>
</feature>
<feature type="transmembrane region" description="Helical; Name=4" evidence="2">
    <location>
        <begin position="141"/>
        <end position="161"/>
    </location>
</feature>
<feature type="topological domain" description="Lumenal" evidence="7">
    <location>
        <begin position="162"/>
        <end position="175"/>
    </location>
</feature>
<feature type="transmembrane region" description="Helical; Name=5" evidence="2">
    <location>
        <begin position="176"/>
        <end position="196"/>
    </location>
</feature>
<feature type="topological domain" description="Cytoplasmic" evidence="7">
    <location>
        <begin position="197"/>
        <end position="218"/>
    </location>
</feature>
<feature type="transmembrane region" description="Helical; Name=6" evidence="2">
    <location>
        <begin position="219"/>
        <end position="241"/>
    </location>
</feature>
<feature type="topological domain" description="Lumenal" evidence="7">
    <location>
        <begin position="242"/>
        <end position="274"/>
    </location>
</feature>
<feature type="transmembrane region" description="Helical; Name=7" evidence="2">
    <location>
        <begin position="275"/>
        <end position="295"/>
    </location>
</feature>
<feature type="topological domain" description="Cytoplasmic" evidence="7">
    <location>
        <begin position="296"/>
        <end position="417"/>
    </location>
</feature>
<feature type="region of interest" description="Disordered" evidence="3">
    <location>
        <begin position="344"/>
        <end position="375"/>
    </location>
</feature>
<feature type="compositionally biased region" description="Polar residues" evidence="3">
    <location>
        <begin position="345"/>
        <end position="354"/>
    </location>
</feature>
<feature type="compositionally biased region" description="Pro residues" evidence="3">
    <location>
        <begin position="364"/>
        <end position="375"/>
    </location>
</feature>
<feature type="glycosylation site" description="N-linked (GlcNAc...) asparagine" evidence="2">
    <location>
        <position position="4"/>
    </location>
</feature>
<feature type="glycosylation site" description="N-linked (GlcNAc...) asparagine" evidence="2">
    <location>
        <position position="257"/>
    </location>
</feature>
<feature type="splice variant" id="VSP_043278" description="In isoform 4." evidence="5">
    <original>M</original>
    <variation>MLWAVRTRCYVVKAQLGPTVALEGRAPRAPGPSCLGNGNCQRPGPITSRNVTRASLPDM</variation>
    <location>
        <position position="1"/>
    </location>
</feature>
<feature type="splice variant" id="VSP_022121" description="In isoform 3." evidence="6">
    <location>
        <begin position="212"/>
        <end position="261"/>
    </location>
</feature>
<feature type="splice variant" id="VSP_043592" description="In isoform 5." evidence="5">
    <original>STSHILNGQVFASRSY</original>
    <variation>YVGQSRLWELVWCHRA</variation>
    <location>
        <begin position="305"/>
        <end position="320"/>
    </location>
</feature>
<feature type="splice variant" id="VSP_043593" description="In isoform 5." evidence="5">
    <location>
        <begin position="321"/>
        <end position="417"/>
    </location>
</feature>
<feature type="splice variant" id="VSP_022122" description="In isoform 2 and isoform 3." evidence="6">
    <original>RCQDQAATTTVSTPPHRRDPPPSPTEYPGPSPPHPRPLCQVCLPLLAQDPGGRGYPLLWPAPCCSCHSELVPSP</original>
    <variation>SMSGSLGSGSWYGAIGREPGWYGGSQTKTTPLLFSQVPGPGGHHHSLYSTPQT</variation>
    <location>
        <begin position="344"/>
        <end position="417"/>
    </location>
</feature>
<feature type="sequence conflict" description="In Ref. 1; BAB71093." evidence="7" ref="1">
    <original>D</original>
    <variation>G</variation>
    <location>
        <position position="254"/>
    </location>
</feature>
<keyword id="KW-0025">Alternative splicing</keyword>
<keyword id="KW-0072">Autophagy</keyword>
<keyword id="KW-0325">Glycoprotein</keyword>
<keyword id="KW-0458">Lysosome</keyword>
<keyword id="KW-0472">Membrane</keyword>
<keyword id="KW-1267">Proteomics identification</keyword>
<keyword id="KW-1185">Reference proteome</keyword>
<keyword id="KW-0812">Transmembrane</keyword>
<keyword id="KW-1133">Transmembrane helix</keyword>